<gene>
    <name evidence="8" type="primary">XYN1</name>
    <name evidence="7" type="synonym">RXF12</name>
    <name evidence="10" type="ordered locus">At1g58370</name>
    <name evidence="11" type="ORF">F19C14.2</name>
    <name evidence="12" type="ORF">F9K23.10</name>
</gene>
<accession>A0A1P8AWH8</accession>
<accession>Q9C643</accession>
<accession>Q9SM08</accession>
<protein>
    <recommendedName>
        <fullName evidence="8">Endo-1,4-beta-xylanase 1</fullName>
        <shortName evidence="8">AtXyn1</shortName>
        <shortName evidence="8">Xylan endohydrolase 1</shortName>
        <shortName evidence="8">Xylanase 1</shortName>
        <ecNumber evidence="4 6">3.2.1.8</ecNumber>
    </recommendedName>
</protein>
<dbReference type="EC" id="3.2.1.8" evidence="4 6"/>
<dbReference type="EMBL" id="AB077822">
    <property type="protein sequence ID" value="BAB83869.1"/>
    <property type="status" value="ALT_SEQ"/>
    <property type="molecule type" value="Genomic_DNA"/>
</dbReference>
<dbReference type="EMBL" id="AC008051">
    <property type="protein sequence ID" value="AAF82251.1"/>
    <property type="status" value="ALT_SEQ"/>
    <property type="molecule type" value="Genomic_DNA"/>
</dbReference>
<dbReference type="EMBL" id="AC082643">
    <property type="protein sequence ID" value="AAG50641.1"/>
    <property type="status" value="ALT_SEQ"/>
    <property type="molecule type" value="Genomic_DNA"/>
</dbReference>
<dbReference type="EMBL" id="CP002684">
    <property type="protein sequence ID" value="AEE33542.1"/>
    <property type="status" value="ALT_SEQ"/>
    <property type="molecule type" value="Genomic_DNA"/>
</dbReference>
<dbReference type="EMBL" id="CP002684">
    <property type="protein sequence ID" value="ANM61018.1"/>
    <property type="molecule type" value="Genomic_DNA"/>
</dbReference>
<dbReference type="EMBL" id="AB008015">
    <property type="protein sequence ID" value="BAA88262.1"/>
    <property type="status" value="ALT_INIT"/>
    <property type="molecule type" value="mRNA"/>
</dbReference>
<dbReference type="PIR" id="D96617">
    <property type="entry name" value="D96617"/>
</dbReference>
<dbReference type="PIR" id="T52467">
    <property type="entry name" value="T52467"/>
</dbReference>
<dbReference type="RefSeq" id="NP_001323263.1">
    <property type="nucleotide sequence ID" value="NM_001333829.1"/>
</dbReference>
<dbReference type="RefSeq" id="NP_176133.1">
    <property type="nucleotide sequence ID" value="NM_104617.4"/>
</dbReference>
<dbReference type="SMR" id="A0A1P8AWH8"/>
<dbReference type="FunCoup" id="A0A1P8AWH8">
    <property type="interactions" value="112"/>
</dbReference>
<dbReference type="STRING" id="3702.A0A1P8AWH8"/>
<dbReference type="CAZy" id="CBM22">
    <property type="family name" value="Carbohydrate-Binding Module Family 22"/>
</dbReference>
<dbReference type="CAZy" id="GH10">
    <property type="family name" value="Glycoside Hydrolase Family 10"/>
</dbReference>
<dbReference type="GlyCosmos" id="A0A1P8AWH8">
    <property type="glycosylation" value="7 sites, No reported glycans"/>
</dbReference>
<dbReference type="GlyGen" id="A0A1P8AWH8">
    <property type="glycosylation" value="7 sites"/>
</dbReference>
<dbReference type="iPTMnet" id="A0A1P8AWH8"/>
<dbReference type="PaxDb" id="3702-AT1G58370.1"/>
<dbReference type="ProteomicsDB" id="242982"/>
<dbReference type="EnsemblPlants" id="AT1G58370.2">
    <property type="protein sequence ID" value="AT1G58370.2"/>
    <property type="gene ID" value="AT1G58370"/>
</dbReference>
<dbReference type="GeneID" id="842206"/>
<dbReference type="Gramene" id="AT1G58370.2">
    <property type="protein sequence ID" value="AT1G58370.2"/>
    <property type="gene ID" value="AT1G58370"/>
</dbReference>
<dbReference type="KEGG" id="ath:AT1G58370"/>
<dbReference type="Araport" id="AT1G58370"/>
<dbReference type="TAIR" id="AT1G58370">
    <property type="gene designation" value="RXF12"/>
</dbReference>
<dbReference type="eggNOG" id="ENOG502QSCW">
    <property type="taxonomic scope" value="Eukaryota"/>
</dbReference>
<dbReference type="HOGENOM" id="CLU_008797_0_0_1"/>
<dbReference type="InParanoid" id="A0A1P8AWH8"/>
<dbReference type="UniPathway" id="UPA00114"/>
<dbReference type="PRO" id="PR:A0A1P8AWH8"/>
<dbReference type="Proteomes" id="UP000006548">
    <property type="component" value="Chromosome 1"/>
</dbReference>
<dbReference type="ExpressionAtlas" id="A0A1P8AWH8">
    <property type="expression patterns" value="baseline and differential"/>
</dbReference>
<dbReference type="GO" id="GO:0005576">
    <property type="term" value="C:extracellular region"/>
    <property type="evidence" value="ECO:0007669"/>
    <property type="project" value="UniProtKB-KW"/>
</dbReference>
<dbReference type="GO" id="GO:0009505">
    <property type="term" value="C:plant-type cell wall"/>
    <property type="evidence" value="ECO:0000314"/>
    <property type="project" value="UniProtKB"/>
</dbReference>
<dbReference type="GO" id="GO:0031176">
    <property type="term" value="F:endo-1,4-beta-xylanase activity"/>
    <property type="evidence" value="ECO:0000314"/>
    <property type="project" value="UniProtKB"/>
</dbReference>
<dbReference type="GO" id="GO:0045493">
    <property type="term" value="P:xylan catabolic process"/>
    <property type="evidence" value="ECO:0007669"/>
    <property type="project" value="UniProtKB-UniPathway"/>
</dbReference>
<dbReference type="FunFam" id="3.20.20.80:FF:000104">
    <property type="entry name" value="Endo-1,4-beta-xylanase A"/>
    <property type="match status" value="1"/>
</dbReference>
<dbReference type="FunFam" id="2.60.120.260:FF:000103">
    <property type="entry name" value="Glycosyl hydrolase family 10 protein"/>
    <property type="match status" value="2"/>
</dbReference>
<dbReference type="FunFam" id="2.60.120.260:FF:000146">
    <property type="entry name" value="Glycosyl hydrolase family 10 protein"/>
    <property type="match status" value="1"/>
</dbReference>
<dbReference type="Gene3D" id="2.60.120.260">
    <property type="entry name" value="Galactose-binding domain-like"/>
    <property type="match status" value="3"/>
</dbReference>
<dbReference type="Gene3D" id="3.20.20.80">
    <property type="entry name" value="Glycosidases"/>
    <property type="match status" value="1"/>
</dbReference>
<dbReference type="InterPro" id="IPR003305">
    <property type="entry name" value="CenC_carb-bd"/>
</dbReference>
<dbReference type="InterPro" id="IPR008979">
    <property type="entry name" value="Galactose-bd-like_sf"/>
</dbReference>
<dbReference type="InterPro" id="IPR044846">
    <property type="entry name" value="GH10"/>
</dbReference>
<dbReference type="InterPro" id="IPR001000">
    <property type="entry name" value="GH10_dom"/>
</dbReference>
<dbReference type="InterPro" id="IPR017853">
    <property type="entry name" value="Glycoside_hydrolase_SF"/>
</dbReference>
<dbReference type="PANTHER" id="PTHR31490:SF1">
    <property type="entry name" value="ENDO-1,4-BETA-XYLANASE 1"/>
    <property type="match status" value="1"/>
</dbReference>
<dbReference type="PANTHER" id="PTHR31490">
    <property type="entry name" value="GLYCOSYL HYDROLASE"/>
    <property type="match status" value="1"/>
</dbReference>
<dbReference type="Pfam" id="PF02018">
    <property type="entry name" value="CBM_4_9"/>
    <property type="match status" value="3"/>
</dbReference>
<dbReference type="Pfam" id="PF00331">
    <property type="entry name" value="Glyco_hydro_10"/>
    <property type="match status" value="1"/>
</dbReference>
<dbReference type="PRINTS" id="PR00134">
    <property type="entry name" value="GLHYDRLASE10"/>
</dbReference>
<dbReference type="SMART" id="SM00633">
    <property type="entry name" value="Glyco_10"/>
    <property type="match status" value="1"/>
</dbReference>
<dbReference type="SUPFAM" id="SSF51445">
    <property type="entry name" value="(Trans)glycosidases"/>
    <property type="match status" value="1"/>
</dbReference>
<dbReference type="SUPFAM" id="SSF49785">
    <property type="entry name" value="Galactose-binding domain-like"/>
    <property type="match status" value="3"/>
</dbReference>
<dbReference type="PROSITE" id="PS00591">
    <property type="entry name" value="GH10_1"/>
    <property type="match status" value="1"/>
</dbReference>
<dbReference type="PROSITE" id="PS51760">
    <property type="entry name" value="GH10_2"/>
    <property type="match status" value="1"/>
</dbReference>
<sequence>MKRFTVCCFSNKIHKNGDRNPDKKSRESMEVSRKDNEEPEKQNNNNVASIIGSDRTNVIVNHDFSSGMHSWHPNCCEAFVVTAESNVSHGVLDPSKCGSYVVVKNRKETWQGLEQDITNRVKPCSLYKVSATVAVSGPVHGLVEVMATLKLESQQSQTNYQFIAKTCVFKEKWVRLEGMFSLPSLPEKVVFYLEGPSPGIDLLIQSVTIHRESEPELERVTAEDETIVVNPNFEDGLNNWSGRSCKIVLHDSMADGKIVPESGKVFASATERTQNWNGIQQEITGKVQRKRVYEATAVVRIYGNNVTTATVQATLWVQNPNQRDQYIGISTVQATDKEWIHLKGKFLLNGSASRVVIYIEGPPPGTDILLNSLTVKHAEKIPPSPPPSIENPAFGVNILTNSHLSDDTTNGWFSLGNCTLSVAEGSPRILPPMARDSLGAHERLSGRYILVTNRTQTWMGPAQMITDKLKLFLTYQISVWVKVGSGINSPQNVNVALGIDSQWVNGGQVEINDDRWHEIGGSFRIEKNPSKALVYVQGPSSGIDLMVAGLQIFPVDRLARIKHLKRQCDKIRKRDVILKFAGVDSSKFSGASVRVRQIRNSFPVGTCISRSNIDNEDFVDFFLKNFNWAVFANELKWYWTEPEQGKLNYQDADDMLNLCSSNNIETRGHCIFWEVQATVQQWIQNMNQTDLNNAVQNRLTDLLNRYKGKFKHYDVNNEMLHGSFYQDKLGKDIRVNMFKTAHQLDPSATLFVNDYHIEDGCDPKSCPEKYTEQILDLQEKGAPVGGIGIQGHIDSPVGPIVCSALDKLGILGLPIWFTELDVSSVNEHIRADDLEVMMWEAFGHPAVEGIMLWGFWELFMSRDNSHLVNAEGDVNEAGKRFLAVKKDWLSHANGHIDQNGAFPFRGYSGNYAVEVITTSSSKVLKTFGVDKEDSSQVITVDLQGL</sequence>
<keyword id="KW-0119">Carbohydrate metabolism</keyword>
<keyword id="KW-0134">Cell wall</keyword>
<keyword id="KW-0325">Glycoprotein</keyword>
<keyword id="KW-0326">Glycosidase</keyword>
<keyword id="KW-0378">Hydrolase</keyword>
<keyword id="KW-0624">Polysaccharide degradation</keyword>
<keyword id="KW-1185">Reference proteome</keyword>
<keyword id="KW-0677">Repeat</keyword>
<keyword id="KW-0964">Secreted</keyword>
<keyword id="KW-0858">Xylan degradation</keyword>
<proteinExistence type="evidence at protein level"/>
<organism>
    <name type="scientific">Arabidopsis thaliana</name>
    <name type="common">Mouse-ear cress</name>
    <dbReference type="NCBI Taxonomy" id="3702"/>
    <lineage>
        <taxon>Eukaryota</taxon>
        <taxon>Viridiplantae</taxon>
        <taxon>Streptophyta</taxon>
        <taxon>Embryophyta</taxon>
        <taxon>Tracheophyta</taxon>
        <taxon>Spermatophyta</taxon>
        <taxon>Magnoliopsida</taxon>
        <taxon>eudicotyledons</taxon>
        <taxon>Gunneridae</taxon>
        <taxon>Pentapetalae</taxon>
        <taxon>rosids</taxon>
        <taxon>malvids</taxon>
        <taxon>Brassicales</taxon>
        <taxon>Brassicaceae</taxon>
        <taxon>Camelineae</taxon>
        <taxon>Arabidopsis</taxon>
    </lineage>
</organism>
<comment type="function">
    <text evidence="1 6">Binds to and hydrolyzes insoluble and soluble xylan substrates (By similarity). Exhibits xylanase activity (PubMed:12154138).</text>
</comment>
<comment type="catalytic activity">
    <reaction evidence="4 6">
        <text>Endohydrolysis of (1-&gt;4)-beta-D-xylosidic linkages in xylans.</text>
        <dbReference type="EC" id="3.2.1.8"/>
    </reaction>
</comment>
<comment type="pathway">
    <text evidence="4 6">Glycan degradation; xylan degradation.</text>
</comment>
<comment type="subcellular location">
    <subcellularLocation>
        <location evidence="6">Secreted</location>
        <location evidence="6">Cell wall</location>
    </subcellularLocation>
</comment>
<comment type="tissue specificity">
    <text evidence="6">Predominantly expressed in vascular bundles, but not in vessel cells. Mostly expressed in stems, at lower levels in roots, and weakly in inflorescences and seedlings.</text>
</comment>
<comment type="developmental stage">
    <text evidence="6">In seedlings, present in the root, hypocotyl and cotyledon veins. In roots, excluded from the root tip, otherwise observed in the endodermis, pericycles and vascular bundles, except vessels. Expressed in the root differentiation zone, especially during root hair formation. In mature plants, mostly detected in vascular bundles, but not in vessel cells.</text>
</comment>
<comment type="domain">
    <text evidence="1">The GH10 domain binds to xylan.</text>
</comment>
<comment type="similarity">
    <text evidence="4">Belongs to the glycosyl hydrolase 10 (cellulase F) family.</text>
</comment>
<comment type="sequence caution" evidence="9">
    <conflict type="erroneous gene model prediction">
        <sequence resource="EMBL-CDS" id="AAF82251"/>
    </conflict>
</comment>
<comment type="sequence caution" evidence="9">
    <conflict type="erroneous gene model prediction">
        <sequence resource="EMBL-CDS" id="AAG50641"/>
    </conflict>
</comment>
<comment type="sequence caution" evidence="9">
    <conflict type="erroneous gene model prediction">
        <sequence resource="EMBL-CDS" id="AEE33542"/>
    </conflict>
</comment>
<comment type="sequence caution" evidence="9">
    <conflict type="erroneous initiation">
        <sequence resource="EMBL-CDS" id="BAA88262"/>
    </conflict>
    <text>Truncated N-terminus.</text>
</comment>
<comment type="sequence caution" evidence="9">
    <conflict type="erroneous gene model prediction">
        <sequence resource="EMBL-CDS" id="BAB83869"/>
    </conflict>
</comment>
<reference key="1">
    <citation type="journal article" date="2002" name="Plant Cell Physiol.">
        <title>A xylanase, AtXyn1, is predominantly expressed in vascular bundles, and four putative xylanase genes were identified in the Arabidopsis thaliana genome.</title>
        <authorList>
            <person name="Suzuki M."/>
            <person name="Kato A."/>
            <person name="Nagata N."/>
            <person name="Komeda Y."/>
        </authorList>
    </citation>
    <scope>NUCLEOTIDE SEQUENCE [GENOMIC DNA]</scope>
    <scope>FUNCTION</scope>
    <scope>CATALYTIC ACTIVITY</scope>
    <scope>TISSUE SPECIFICITY</scope>
    <scope>DEVELOPMENTAL STAGE</scope>
    <scope>SUBCELLULAR LOCATION</scope>
    <scope>GENE FAMILY</scope>
    <source>
        <strain>cv. Columbia</strain>
    </source>
</reference>
<reference key="2">
    <citation type="journal article" date="2000" name="Nature">
        <title>Sequence and analysis of chromosome 1 of the plant Arabidopsis thaliana.</title>
        <authorList>
            <person name="Theologis A."/>
            <person name="Ecker J.R."/>
            <person name="Palm C.J."/>
            <person name="Federspiel N.A."/>
            <person name="Kaul S."/>
            <person name="White O."/>
            <person name="Alonso J."/>
            <person name="Altafi H."/>
            <person name="Araujo R."/>
            <person name="Bowman C.L."/>
            <person name="Brooks S.Y."/>
            <person name="Buehler E."/>
            <person name="Chan A."/>
            <person name="Chao Q."/>
            <person name="Chen H."/>
            <person name="Cheuk R.F."/>
            <person name="Chin C.W."/>
            <person name="Chung M.K."/>
            <person name="Conn L."/>
            <person name="Conway A.B."/>
            <person name="Conway A.R."/>
            <person name="Creasy T.H."/>
            <person name="Dewar K."/>
            <person name="Dunn P."/>
            <person name="Etgu P."/>
            <person name="Feldblyum T.V."/>
            <person name="Feng J.-D."/>
            <person name="Fong B."/>
            <person name="Fujii C.Y."/>
            <person name="Gill J.E."/>
            <person name="Goldsmith A.D."/>
            <person name="Haas B."/>
            <person name="Hansen N.F."/>
            <person name="Hughes B."/>
            <person name="Huizar L."/>
            <person name="Hunter J.L."/>
            <person name="Jenkins J."/>
            <person name="Johnson-Hopson C."/>
            <person name="Khan S."/>
            <person name="Khaykin E."/>
            <person name="Kim C.J."/>
            <person name="Koo H.L."/>
            <person name="Kremenetskaia I."/>
            <person name="Kurtz D.B."/>
            <person name="Kwan A."/>
            <person name="Lam B."/>
            <person name="Langin-Hooper S."/>
            <person name="Lee A."/>
            <person name="Lee J.M."/>
            <person name="Lenz C.A."/>
            <person name="Li J.H."/>
            <person name="Li Y.-P."/>
            <person name="Lin X."/>
            <person name="Liu S.X."/>
            <person name="Liu Z.A."/>
            <person name="Luros J.S."/>
            <person name="Maiti R."/>
            <person name="Marziali A."/>
            <person name="Militscher J."/>
            <person name="Miranda M."/>
            <person name="Nguyen M."/>
            <person name="Nierman W.C."/>
            <person name="Osborne B.I."/>
            <person name="Pai G."/>
            <person name="Peterson J."/>
            <person name="Pham P.K."/>
            <person name="Rizzo M."/>
            <person name="Rooney T."/>
            <person name="Rowley D."/>
            <person name="Sakano H."/>
            <person name="Salzberg S.L."/>
            <person name="Schwartz J.R."/>
            <person name="Shinn P."/>
            <person name="Southwick A.M."/>
            <person name="Sun H."/>
            <person name="Tallon L.J."/>
            <person name="Tambunga G."/>
            <person name="Toriumi M.J."/>
            <person name="Town C.D."/>
            <person name="Utterback T."/>
            <person name="Van Aken S."/>
            <person name="Vaysberg M."/>
            <person name="Vysotskaia V.S."/>
            <person name="Walker M."/>
            <person name="Wu D."/>
            <person name="Yu G."/>
            <person name="Fraser C.M."/>
            <person name="Venter J.C."/>
            <person name="Davis R.W."/>
        </authorList>
    </citation>
    <scope>NUCLEOTIDE SEQUENCE [LARGE SCALE GENOMIC DNA]</scope>
    <source>
        <strain>cv. Columbia</strain>
    </source>
</reference>
<reference key="3">
    <citation type="journal article" date="2017" name="Plant J.">
        <title>Araport11: a complete reannotation of the Arabidopsis thaliana reference genome.</title>
        <authorList>
            <person name="Cheng C.Y."/>
            <person name="Krishnakumar V."/>
            <person name="Chan A.P."/>
            <person name="Thibaud-Nissen F."/>
            <person name="Schobel S."/>
            <person name="Town C.D."/>
        </authorList>
    </citation>
    <scope>GENOME REANNOTATION</scope>
    <source>
        <strain>cv. Columbia</strain>
    </source>
</reference>
<reference key="4">
    <citation type="journal article" date="1999" name="Gene">
        <title>Isolation and analysis of cDNA within a 300 kb Arabidopsis thaliana genomic region located around the 100 map unit of chromosome 1.</title>
        <authorList>
            <person name="Kato A."/>
            <person name="Suzuki M."/>
            <person name="Kuwahara A."/>
            <person name="Ooe H."/>
            <person name="Higano-Inaba K."/>
            <person name="Komeda Y."/>
        </authorList>
    </citation>
    <scope>NUCLEOTIDE SEQUENCE [MRNA] OF 17-945</scope>
    <source>
        <strain>cv. Columbia</strain>
    </source>
</reference>
<feature type="chain" id="PRO_0000445195" description="Endo-1,4-beta-xylanase 1">
    <location>
        <begin position="1"/>
        <end position="945"/>
    </location>
</feature>
<feature type="domain" description="CBM-cenC 1" evidence="2">
    <location>
        <begin position="57"/>
        <end position="197"/>
    </location>
</feature>
<feature type="domain" description="CBM-cenC 2" evidence="2">
    <location>
        <begin position="227"/>
        <end position="362"/>
    </location>
</feature>
<feature type="domain" description="CBM-cenC 3" evidence="2">
    <location>
        <begin position="397"/>
        <end position="541"/>
    </location>
</feature>
<feature type="domain" description="GH10" evidence="4">
    <location>
        <begin position="589"/>
        <end position="884"/>
    </location>
</feature>
<feature type="region of interest" description="Disordered" evidence="5">
    <location>
        <begin position="16"/>
        <end position="50"/>
    </location>
</feature>
<feature type="compositionally biased region" description="Basic and acidic residues" evidence="5">
    <location>
        <begin position="16"/>
        <end position="41"/>
    </location>
</feature>
<feature type="active site" description="Proton donor" evidence="4">
    <location>
        <position position="718"/>
    </location>
</feature>
<feature type="active site" description="Nucleophile" evidence="4">
    <location>
        <position position="819"/>
    </location>
</feature>
<feature type="glycosylation site" description="N-linked (GlcNAc...) asparagine" evidence="3">
    <location>
        <position position="86"/>
    </location>
</feature>
<feature type="glycosylation site" description="N-linked (GlcNAc...) asparagine" evidence="3">
    <location>
        <position position="239"/>
    </location>
</feature>
<feature type="glycosylation site" description="N-linked (GlcNAc...) asparagine" evidence="3">
    <location>
        <position position="305"/>
    </location>
</feature>
<feature type="glycosylation site" description="N-linked (GlcNAc...) asparagine" evidence="3">
    <location>
        <position position="349"/>
    </location>
</feature>
<feature type="glycosylation site" description="N-linked (GlcNAc...) asparagine" evidence="3">
    <location>
        <position position="417"/>
    </location>
</feature>
<feature type="glycosylation site" description="N-linked (GlcNAc...) asparagine" evidence="3">
    <location>
        <position position="453"/>
    </location>
</feature>
<feature type="glycosylation site" description="N-linked (GlcNAc...) asparagine" evidence="3">
    <location>
        <position position="687"/>
    </location>
</feature>
<name>XYN1_ARATH</name>
<evidence type="ECO:0000250" key="1">
    <source>
        <dbReference type="UniProtKB" id="A3DH97"/>
    </source>
</evidence>
<evidence type="ECO:0000255" key="2"/>
<evidence type="ECO:0000255" key="3">
    <source>
        <dbReference type="PROSITE-ProRule" id="PRU00498"/>
    </source>
</evidence>
<evidence type="ECO:0000255" key="4">
    <source>
        <dbReference type="PROSITE-ProRule" id="PRU01096"/>
    </source>
</evidence>
<evidence type="ECO:0000256" key="5">
    <source>
        <dbReference type="SAM" id="MobiDB-lite"/>
    </source>
</evidence>
<evidence type="ECO:0000269" key="6">
    <source>
    </source>
</evidence>
<evidence type="ECO:0000303" key="7">
    <source>
    </source>
</evidence>
<evidence type="ECO:0000303" key="8">
    <source>
    </source>
</evidence>
<evidence type="ECO:0000305" key="9"/>
<evidence type="ECO:0000312" key="10">
    <source>
        <dbReference type="Araport" id="AT1G58370"/>
    </source>
</evidence>
<evidence type="ECO:0000312" key="11">
    <source>
        <dbReference type="EMBL" id="AAF82251.1"/>
    </source>
</evidence>
<evidence type="ECO:0000312" key="12">
    <source>
        <dbReference type="EMBL" id="AAG50641.1"/>
    </source>
</evidence>